<organism>
    <name type="scientific">Arabidopsis thaliana</name>
    <name type="common">Mouse-ear cress</name>
    <dbReference type="NCBI Taxonomy" id="3702"/>
    <lineage>
        <taxon>Eukaryota</taxon>
        <taxon>Viridiplantae</taxon>
        <taxon>Streptophyta</taxon>
        <taxon>Embryophyta</taxon>
        <taxon>Tracheophyta</taxon>
        <taxon>Spermatophyta</taxon>
        <taxon>Magnoliopsida</taxon>
        <taxon>eudicotyledons</taxon>
        <taxon>Gunneridae</taxon>
        <taxon>Pentapetalae</taxon>
        <taxon>rosids</taxon>
        <taxon>malvids</taxon>
        <taxon>Brassicales</taxon>
        <taxon>Brassicaceae</taxon>
        <taxon>Camelineae</taxon>
        <taxon>Arabidopsis</taxon>
    </lineage>
</organism>
<proteinExistence type="evidence at transcript level"/>
<evidence type="ECO:0000256" key="1">
    <source>
        <dbReference type="SAM" id="MobiDB-lite"/>
    </source>
</evidence>
<evidence type="ECO:0000303" key="2">
    <source>
    </source>
</evidence>
<evidence type="ECO:0000305" key="3"/>
<feature type="chain" id="PRO_0000104897" description="Large ribosomal subunit protein uL15y">
    <location>
        <begin position="1"/>
        <end position="146"/>
    </location>
</feature>
<feature type="region of interest" description="Disordered" evidence="1">
    <location>
        <begin position="1"/>
        <end position="38"/>
    </location>
</feature>
<feature type="compositionally biased region" description="Basic residues" evidence="1">
    <location>
        <begin position="1"/>
        <end position="14"/>
    </location>
</feature>
<feature type="compositionally biased region" description="Basic residues" evidence="1">
    <location>
        <begin position="21"/>
        <end position="30"/>
    </location>
</feature>
<feature type="sequence conflict" description="In Ref. 4; CAA81190." evidence="3" ref="4">
    <original>TA</original>
    <variation>DG</variation>
    <location>
        <begin position="3"/>
        <end position="4"/>
    </location>
</feature>
<feature type="sequence conflict" description="In Ref. 4; CAA81190." evidence="3" ref="4">
    <original>G</original>
    <variation>V</variation>
    <location>
        <position position="31"/>
    </location>
</feature>
<feature type="sequence conflict" description="In Ref. 4." evidence="3" ref="4">
    <original>G</original>
    <variation>C</variation>
    <location>
        <position position="139"/>
    </location>
</feature>
<comment type="similarity">
    <text evidence="3">Belongs to the universal ribosomal protein uL15 family.</text>
</comment>
<dbReference type="EMBL" id="AC005292">
    <property type="protein sequence ID" value="AAF86998.1"/>
    <property type="molecule type" value="Genomic_DNA"/>
</dbReference>
<dbReference type="EMBL" id="CP002684">
    <property type="protein sequence ID" value="AEE30368.1"/>
    <property type="molecule type" value="Genomic_DNA"/>
</dbReference>
<dbReference type="EMBL" id="AF324716">
    <property type="protein sequence ID" value="AAG40067.1"/>
    <property type="molecule type" value="mRNA"/>
</dbReference>
<dbReference type="EMBL" id="AF349525">
    <property type="protein sequence ID" value="AAK15572.1"/>
    <property type="molecule type" value="mRNA"/>
</dbReference>
<dbReference type="EMBL" id="AF410280">
    <property type="protein sequence ID" value="AAK95266.1"/>
    <property type="molecule type" value="mRNA"/>
</dbReference>
<dbReference type="EMBL" id="BT000542">
    <property type="protein sequence ID" value="AAN18111.1"/>
    <property type="molecule type" value="mRNA"/>
</dbReference>
<dbReference type="EMBL" id="Z26208">
    <property type="protein sequence ID" value="CAA81190.1"/>
    <property type="molecule type" value="mRNA"/>
</dbReference>
<dbReference type="RefSeq" id="NP_173743.1">
    <property type="nucleotide sequence ID" value="NM_102178.3"/>
</dbReference>
<dbReference type="SMR" id="Q9LR33"/>
<dbReference type="BioGRID" id="24177">
    <property type="interactions" value="7"/>
</dbReference>
<dbReference type="FunCoup" id="Q9LR33">
    <property type="interactions" value="2752"/>
</dbReference>
<dbReference type="IntAct" id="Q9LR33">
    <property type="interactions" value="1"/>
</dbReference>
<dbReference type="STRING" id="3702.Q9LR33"/>
<dbReference type="PaxDb" id="3702-AT1G23290.1"/>
<dbReference type="ProteomicsDB" id="225939"/>
<dbReference type="EnsemblPlants" id="AT1G23290.1">
    <property type="protein sequence ID" value="AT1G23290.1"/>
    <property type="gene ID" value="AT1G23290"/>
</dbReference>
<dbReference type="GeneID" id="838938"/>
<dbReference type="Gramene" id="AT1G23290.1">
    <property type="protein sequence ID" value="AT1G23290.1"/>
    <property type="gene ID" value="AT1G23290"/>
</dbReference>
<dbReference type="KEGG" id="ath:AT1G23290"/>
<dbReference type="Araport" id="AT1G23290"/>
<dbReference type="TAIR" id="AT1G23290">
    <property type="gene designation" value="RPL27AB"/>
</dbReference>
<dbReference type="eggNOG" id="KOG1742">
    <property type="taxonomic scope" value="Eukaryota"/>
</dbReference>
<dbReference type="HOGENOM" id="CLU_109163_1_0_1"/>
<dbReference type="InParanoid" id="Q9LR33"/>
<dbReference type="OMA" id="HYARNKY"/>
<dbReference type="OrthoDB" id="61900at2759"/>
<dbReference type="PhylomeDB" id="Q9LR33"/>
<dbReference type="CD-CODE" id="4299E36E">
    <property type="entry name" value="Nucleolus"/>
</dbReference>
<dbReference type="PRO" id="PR:Q9LR33"/>
<dbReference type="Proteomes" id="UP000006548">
    <property type="component" value="Chromosome 1"/>
</dbReference>
<dbReference type="ExpressionAtlas" id="Q9LR33">
    <property type="expression patterns" value="baseline"/>
</dbReference>
<dbReference type="GO" id="GO:0022625">
    <property type="term" value="C:cytosolic large ribosomal subunit"/>
    <property type="evidence" value="ECO:0007005"/>
    <property type="project" value="TAIR"/>
</dbReference>
<dbReference type="GO" id="GO:0022626">
    <property type="term" value="C:cytosolic ribosome"/>
    <property type="evidence" value="ECO:0007005"/>
    <property type="project" value="TAIR"/>
</dbReference>
<dbReference type="GO" id="GO:0005730">
    <property type="term" value="C:nucleolus"/>
    <property type="evidence" value="ECO:0007005"/>
    <property type="project" value="TAIR"/>
</dbReference>
<dbReference type="GO" id="GO:0005634">
    <property type="term" value="C:nucleus"/>
    <property type="evidence" value="ECO:0007005"/>
    <property type="project" value="TAIR"/>
</dbReference>
<dbReference type="GO" id="GO:0009506">
    <property type="term" value="C:plasmodesma"/>
    <property type="evidence" value="ECO:0007005"/>
    <property type="project" value="TAIR"/>
</dbReference>
<dbReference type="GO" id="GO:0003729">
    <property type="term" value="F:mRNA binding"/>
    <property type="evidence" value="ECO:0000314"/>
    <property type="project" value="TAIR"/>
</dbReference>
<dbReference type="GO" id="GO:0003735">
    <property type="term" value="F:structural constituent of ribosome"/>
    <property type="evidence" value="ECO:0000314"/>
    <property type="project" value="CAFA"/>
</dbReference>
<dbReference type="GO" id="GO:0009908">
    <property type="term" value="P:flower development"/>
    <property type="evidence" value="ECO:0000315"/>
    <property type="project" value="TAIR"/>
</dbReference>
<dbReference type="GO" id="GO:0010229">
    <property type="term" value="P:inflorescence development"/>
    <property type="evidence" value="ECO:0000315"/>
    <property type="project" value="TAIR"/>
</dbReference>
<dbReference type="GO" id="GO:0009791">
    <property type="term" value="P:post-embryonic development"/>
    <property type="evidence" value="ECO:0000315"/>
    <property type="project" value="TAIR"/>
</dbReference>
<dbReference type="GO" id="GO:0006412">
    <property type="term" value="P:translation"/>
    <property type="evidence" value="ECO:0007669"/>
    <property type="project" value="InterPro"/>
</dbReference>
<dbReference type="FunFam" id="3.100.10.10:FF:000002">
    <property type="entry name" value="60S ribosomal protein L27a"/>
    <property type="match status" value="1"/>
</dbReference>
<dbReference type="Gene3D" id="3.100.10.10">
    <property type="match status" value="1"/>
</dbReference>
<dbReference type="HAMAP" id="MF_01341">
    <property type="entry name" value="Ribosomal_uL15"/>
    <property type="match status" value="1"/>
</dbReference>
<dbReference type="InterPro" id="IPR030878">
    <property type="entry name" value="Ribosomal_uL15"/>
</dbReference>
<dbReference type="InterPro" id="IPR021131">
    <property type="entry name" value="Ribosomal_uL15/eL18"/>
</dbReference>
<dbReference type="InterPro" id="IPR036227">
    <property type="entry name" value="Ribosomal_uL15/eL18_sf"/>
</dbReference>
<dbReference type="InterPro" id="IPR001196">
    <property type="entry name" value="Ribosomal_uL15_CS"/>
</dbReference>
<dbReference type="PANTHER" id="PTHR11721">
    <property type="entry name" value="60S RIBOSOMAL PROTEIN L27A"/>
    <property type="match status" value="1"/>
</dbReference>
<dbReference type="PANTHER" id="PTHR11721:SF28">
    <property type="entry name" value="LARGE RIBOSOMAL SUBUNIT PROTEIN UL15Y"/>
    <property type="match status" value="1"/>
</dbReference>
<dbReference type="Pfam" id="PF00828">
    <property type="entry name" value="Ribosomal_L27A"/>
    <property type="match status" value="1"/>
</dbReference>
<dbReference type="SUPFAM" id="SSF52080">
    <property type="entry name" value="Ribosomal proteins L15p and L18e"/>
    <property type="match status" value="1"/>
</dbReference>
<dbReference type="PROSITE" id="PS00475">
    <property type="entry name" value="RIBOSOMAL_L15"/>
    <property type="match status" value="1"/>
</dbReference>
<keyword id="KW-1185">Reference proteome</keyword>
<keyword id="KW-0687">Ribonucleoprotein</keyword>
<keyword id="KW-0689">Ribosomal protein</keyword>
<sequence>MATALKKNRKKRGHVSAGHGRIGKHRKHPGGRGNAGGMHHHRILFDKYHPGYFGKVGMRYFHKLRNKFFCPIVNLDKLWSLVPEDVKAKSSKDNVPLIDVTQHGFFKVLGKGHLPENKPFVVKAKLISKTAEKKIKEAGGAVVLTA</sequence>
<reference key="1">
    <citation type="journal article" date="2000" name="Nature">
        <title>Sequence and analysis of chromosome 1 of the plant Arabidopsis thaliana.</title>
        <authorList>
            <person name="Theologis A."/>
            <person name="Ecker J.R."/>
            <person name="Palm C.J."/>
            <person name="Federspiel N.A."/>
            <person name="Kaul S."/>
            <person name="White O."/>
            <person name="Alonso J."/>
            <person name="Altafi H."/>
            <person name="Araujo R."/>
            <person name="Bowman C.L."/>
            <person name="Brooks S.Y."/>
            <person name="Buehler E."/>
            <person name="Chan A."/>
            <person name="Chao Q."/>
            <person name="Chen H."/>
            <person name="Cheuk R.F."/>
            <person name="Chin C.W."/>
            <person name="Chung M.K."/>
            <person name="Conn L."/>
            <person name="Conway A.B."/>
            <person name="Conway A.R."/>
            <person name="Creasy T.H."/>
            <person name="Dewar K."/>
            <person name="Dunn P."/>
            <person name="Etgu P."/>
            <person name="Feldblyum T.V."/>
            <person name="Feng J.-D."/>
            <person name="Fong B."/>
            <person name="Fujii C.Y."/>
            <person name="Gill J.E."/>
            <person name="Goldsmith A.D."/>
            <person name="Haas B."/>
            <person name="Hansen N.F."/>
            <person name="Hughes B."/>
            <person name="Huizar L."/>
            <person name="Hunter J.L."/>
            <person name="Jenkins J."/>
            <person name="Johnson-Hopson C."/>
            <person name="Khan S."/>
            <person name="Khaykin E."/>
            <person name="Kim C.J."/>
            <person name="Koo H.L."/>
            <person name="Kremenetskaia I."/>
            <person name="Kurtz D.B."/>
            <person name="Kwan A."/>
            <person name="Lam B."/>
            <person name="Langin-Hooper S."/>
            <person name="Lee A."/>
            <person name="Lee J.M."/>
            <person name="Lenz C.A."/>
            <person name="Li J.H."/>
            <person name="Li Y.-P."/>
            <person name="Lin X."/>
            <person name="Liu S.X."/>
            <person name="Liu Z.A."/>
            <person name="Luros J.S."/>
            <person name="Maiti R."/>
            <person name="Marziali A."/>
            <person name="Militscher J."/>
            <person name="Miranda M."/>
            <person name="Nguyen M."/>
            <person name="Nierman W.C."/>
            <person name="Osborne B.I."/>
            <person name="Pai G."/>
            <person name="Peterson J."/>
            <person name="Pham P.K."/>
            <person name="Rizzo M."/>
            <person name="Rooney T."/>
            <person name="Rowley D."/>
            <person name="Sakano H."/>
            <person name="Salzberg S.L."/>
            <person name="Schwartz J.R."/>
            <person name="Shinn P."/>
            <person name="Southwick A.M."/>
            <person name="Sun H."/>
            <person name="Tallon L.J."/>
            <person name="Tambunga G."/>
            <person name="Toriumi M.J."/>
            <person name="Town C.D."/>
            <person name="Utterback T."/>
            <person name="Van Aken S."/>
            <person name="Vaysberg M."/>
            <person name="Vysotskaia V.S."/>
            <person name="Walker M."/>
            <person name="Wu D."/>
            <person name="Yu G."/>
            <person name="Fraser C.M."/>
            <person name="Venter J.C."/>
            <person name="Davis R.W."/>
        </authorList>
    </citation>
    <scope>NUCLEOTIDE SEQUENCE [LARGE SCALE GENOMIC DNA]</scope>
    <source>
        <strain>cv. Columbia</strain>
    </source>
</reference>
<reference key="2">
    <citation type="journal article" date="2017" name="Plant J.">
        <title>Araport11: a complete reannotation of the Arabidopsis thaliana reference genome.</title>
        <authorList>
            <person name="Cheng C.Y."/>
            <person name="Krishnakumar V."/>
            <person name="Chan A.P."/>
            <person name="Thibaud-Nissen F."/>
            <person name="Schobel S."/>
            <person name="Town C.D."/>
        </authorList>
    </citation>
    <scope>GENOME REANNOTATION</scope>
    <source>
        <strain>cv. Columbia</strain>
    </source>
</reference>
<reference key="3">
    <citation type="journal article" date="2003" name="Science">
        <title>Empirical analysis of transcriptional activity in the Arabidopsis genome.</title>
        <authorList>
            <person name="Yamada K."/>
            <person name="Lim J."/>
            <person name="Dale J.M."/>
            <person name="Chen H."/>
            <person name="Shinn P."/>
            <person name="Palm C.J."/>
            <person name="Southwick A.M."/>
            <person name="Wu H.C."/>
            <person name="Kim C.J."/>
            <person name="Nguyen M."/>
            <person name="Pham P.K."/>
            <person name="Cheuk R.F."/>
            <person name="Karlin-Newmann G."/>
            <person name="Liu S.X."/>
            <person name="Lam B."/>
            <person name="Sakano H."/>
            <person name="Wu T."/>
            <person name="Yu G."/>
            <person name="Miranda M."/>
            <person name="Quach H.L."/>
            <person name="Tripp M."/>
            <person name="Chang C.H."/>
            <person name="Lee J.M."/>
            <person name="Toriumi M.J."/>
            <person name="Chan M.M."/>
            <person name="Tang C.C."/>
            <person name="Onodera C.S."/>
            <person name="Deng J.M."/>
            <person name="Akiyama K."/>
            <person name="Ansari Y."/>
            <person name="Arakawa T."/>
            <person name="Banh J."/>
            <person name="Banno F."/>
            <person name="Bowser L."/>
            <person name="Brooks S.Y."/>
            <person name="Carninci P."/>
            <person name="Chao Q."/>
            <person name="Choy N."/>
            <person name="Enju A."/>
            <person name="Goldsmith A.D."/>
            <person name="Gurjal M."/>
            <person name="Hansen N.F."/>
            <person name="Hayashizaki Y."/>
            <person name="Johnson-Hopson C."/>
            <person name="Hsuan V.W."/>
            <person name="Iida K."/>
            <person name="Karnes M."/>
            <person name="Khan S."/>
            <person name="Koesema E."/>
            <person name="Ishida J."/>
            <person name="Jiang P.X."/>
            <person name="Jones T."/>
            <person name="Kawai J."/>
            <person name="Kamiya A."/>
            <person name="Meyers C."/>
            <person name="Nakajima M."/>
            <person name="Narusaka M."/>
            <person name="Seki M."/>
            <person name="Sakurai T."/>
            <person name="Satou M."/>
            <person name="Tamse R."/>
            <person name="Vaysberg M."/>
            <person name="Wallender E.K."/>
            <person name="Wong C."/>
            <person name="Yamamura Y."/>
            <person name="Yuan S."/>
            <person name="Shinozaki K."/>
            <person name="Davis R.W."/>
            <person name="Theologis A."/>
            <person name="Ecker J.R."/>
        </authorList>
    </citation>
    <scope>NUCLEOTIDE SEQUENCE [LARGE SCALE MRNA]</scope>
    <source>
        <strain>cv. Columbia</strain>
    </source>
</reference>
<reference key="4">
    <citation type="journal article" date="1996" name="Plant J.">
        <title>Further progress towards a catalogue of all Arabidopsis genes: analysis of a set of 5000 non-redundant ESTs.</title>
        <authorList>
            <person name="Cooke R."/>
            <person name="Raynal M."/>
            <person name="Laudie M."/>
            <person name="Grellet F."/>
            <person name="Delseny M."/>
            <person name="Morris P.-C."/>
            <person name="Guerrier D."/>
            <person name="Giraudat J."/>
            <person name="Quigley F."/>
            <person name="Clabault G."/>
            <person name="Li Y.-F."/>
            <person name="Mache R."/>
            <person name="Krivitzky M."/>
            <person name="Gy I.J.-J."/>
            <person name="Kreis M."/>
            <person name="Lecharny A."/>
            <person name="Parmentier Y."/>
            <person name="Marbach J."/>
            <person name="Fleck J."/>
            <person name="Clement B."/>
            <person name="Philipps G."/>
            <person name="Herve C."/>
            <person name="Bardet C."/>
            <person name="Tremousaygue D."/>
            <person name="Lescure B."/>
            <person name="Lacomme C."/>
            <person name="Roby D."/>
            <person name="Jourjon M.-F."/>
            <person name="Chabrier P."/>
            <person name="Charpenteau J.-L."/>
            <person name="Desprez T."/>
            <person name="Amselem J."/>
            <person name="Chiapello H."/>
            <person name="Hoefte H."/>
        </authorList>
    </citation>
    <scope>NUCLEOTIDE SEQUENCE [LARGE SCALE MRNA] OF 3-141</scope>
    <source>
        <strain>cv. Columbia</strain>
        <tissue>Seedling</tissue>
    </source>
</reference>
<reference key="5">
    <citation type="journal article" date="2001" name="Plant Physiol.">
        <title>The organization of cytoplasmic ribosomal protein genes in the Arabidopsis genome.</title>
        <authorList>
            <person name="Barakat A."/>
            <person name="Szick-Miranda K."/>
            <person name="Chang I.-F."/>
            <person name="Guyot R."/>
            <person name="Blanc G."/>
            <person name="Cooke R."/>
            <person name="Delseny M."/>
            <person name="Bailey-Serres J."/>
        </authorList>
    </citation>
    <scope>GENE FAMILY ORGANIZATION</scope>
    <scope>NOMENCLATURE</scope>
</reference>
<reference key="6">
    <citation type="journal article" date="2023" name="Plant Cell">
        <title>An updated nomenclature for plant ribosomal protein genes.</title>
        <authorList>
            <person name="Scarpin M.R."/>
            <person name="Busche M."/>
            <person name="Martinez R.E."/>
            <person name="Harper L.C."/>
            <person name="Reiser L."/>
            <person name="Szakonyi D."/>
            <person name="Merchante C."/>
            <person name="Lan T."/>
            <person name="Xiong W."/>
            <person name="Mo B."/>
            <person name="Tang G."/>
            <person name="Chen X."/>
            <person name="Bailey-Serres J."/>
            <person name="Browning K.S."/>
            <person name="Brunkard J.O."/>
        </authorList>
    </citation>
    <scope>NOMENCLATURE</scope>
</reference>
<protein>
    <recommendedName>
        <fullName evidence="2">Large ribosomal subunit protein uL15y</fullName>
    </recommendedName>
    <alternativeName>
        <fullName>60S ribosomal protein L27a-2</fullName>
    </alternativeName>
</protein>
<accession>Q9LR33</accession>
<gene>
    <name type="primary">RPL27AB</name>
    <name type="ordered locus">At1g23290</name>
    <name type="ORF">F26F24.13</name>
    <name type="ORF">F26F24_23</name>
</gene>
<name>R27A2_ARATH</name>